<name>RAX1_SCHPO</name>
<comment type="function">
    <text evidence="1">May be involved in cell polarization and division.</text>
</comment>
<comment type="subcellular location">
    <subcellularLocation>
        <location evidence="1">Cell membrane</location>
        <topology evidence="1">Multi-pass membrane protein</topology>
    </subcellularLocation>
    <subcellularLocation>
        <location evidence="3">Endoplasmic reticulum membrane</location>
        <topology evidence="3">Multi-pass membrane protein</topology>
    </subcellularLocation>
</comment>
<gene>
    <name type="primary">rax1</name>
    <name type="ORF">SPAC23G3.05c</name>
</gene>
<keyword id="KW-0131">Cell cycle</keyword>
<keyword id="KW-0132">Cell division</keyword>
<keyword id="KW-1003">Cell membrane</keyword>
<keyword id="KW-0256">Endoplasmic reticulum</keyword>
<keyword id="KW-0472">Membrane</keyword>
<keyword id="KW-1185">Reference proteome</keyword>
<keyword id="KW-0812">Transmembrane</keyword>
<keyword id="KW-1133">Transmembrane helix</keyword>
<sequence>MASAPRVSEVLTKKNLPPLSLYNFYIYIRDEENAIEFLDLFLDIMLHKFLFREHIRGLYKAGVTSTSLNTESSSTLGPHHFTRFRSASLSLEDLSTVYWPNFGPLLLEELSNEQTINSSDLLLSKDRAAYLKNLLTSNIQSLTQESTVISKEQVKMFTQIIIEKYFNPASPHEVMLPPQLVQPILDCKEHQRQDELRLFEDVETYLLNFLLKPAYYRFLNHKFKHNLNPLTCTGRFIIGYVSTFAAYWLGFCGIFLDYSRRKRVWTLLPFAFGFYNLICTWSKHDPVLALLGYSEVKPFHYEKVLQPSIRLSLNRRAIFVLSIIVLIVGANTAIFSCVPSIRL</sequence>
<evidence type="ECO:0000250" key="1"/>
<evidence type="ECO:0000255" key="2"/>
<evidence type="ECO:0000305" key="3"/>
<feature type="chain" id="PRO_0000353802" description="Protein rax1">
    <location>
        <begin position="1"/>
        <end position="343"/>
    </location>
</feature>
<feature type="topological domain" description="Cytoplasmic" evidence="2">
    <location>
        <begin position="1"/>
        <end position="235"/>
    </location>
</feature>
<feature type="transmembrane region" description="Helical" evidence="2">
    <location>
        <begin position="236"/>
        <end position="256"/>
    </location>
</feature>
<feature type="topological domain" description="Extracellular" evidence="2">
    <location>
        <begin position="257"/>
        <end position="263"/>
    </location>
</feature>
<feature type="transmembrane region" description="Helical" evidence="2">
    <location>
        <begin position="264"/>
        <end position="284"/>
    </location>
</feature>
<feature type="topological domain" description="Cytoplasmic" evidence="2">
    <location>
        <begin position="285"/>
        <end position="317"/>
    </location>
</feature>
<feature type="transmembrane region" description="Helical" evidence="2">
    <location>
        <begin position="318"/>
        <end position="338"/>
    </location>
</feature>
<feature type="topological domain" description="Extracellular" evidence="2">
    <location>
        <begin position="339"/>
        <end position="343"/>
    </location>
</feature>
<feature type="domain" description="RGS">
    <location>
        <begin position="109"/>
        <end position="228"/>
    </location>
</feature>
<reference key="1">
    <citation type="journal article" date="2002" name="Nature">
        <title>The genome sequence of Schizosaccharomyces pombe.</title>
        <authorList>
            <person name="Wood V."/>
            <person name="Gwilliam R."/>
            <person name="Rajandream M.A."/>
            <person name="Lyne M.H."/>
            <person name="Lyne R."/>
            <person name="Stewart A."/>
            <person name="Sgouros J.G."/>
            <person name="Peat N."/>
            <person name="Hayles J."/>
            <person name="Baker S.G."/>
            <person name="Basham D."/>
            <person name="Bowman S."/>
            <person name="Brooks K."/>
            <person name="Brown D."/>
            <person name="Brown S."/>
            <person name="Chillingworth T."/>
            <person name="Churcher C.M."/>
            <person name="Collins M."/>
            <person name="Connor R."/>
            <person name="Cronin A."/>
            <person name="Davis P."/>
            <person name="Feltwell T."/>
            <person name="Fraser A."/>
            <person name="Gentles S."/>
            <person name="Goble A."/>
            <person name="Hamlin N."/>
            <person name="Harris D.E."/>
            <person name="Hidalgo J."/>
            <person name="Hodgson G."/>
            <person name="Holroyd S."/>
            <person name="Hornsby T."/>
            <person name="Howarth S."/>
            <person name="Huckle E.J."/>
            <person name="Hunt S."/>
            <person name="Jagels K."/>
            <person name="James K.D."/>
            <person name="Jones L."/>
            <person name="Jones M."/>
            <person name="Leather S."/>
            <person name="McDonald S."/>
            <person name="McLean J."/>
            <person name="Mooney P."/>
            <person name="Moule S."/>
            <person name="Mungall K.L."/>
            <person name="Murphy L.D."/>
            <person name="Niblett D."/>
            <person name="Odell C."/>
            <person name="Oliver K."/>
            <person name="O'Neil S."/>
            <person name="Pearson D."/>
            <person name="Quail M.A."/>
            <person name="Rabbinowitsch E."/>
            <person name="Rutherford K.M."/>
            <person name="Rutter S."/>
            <person name="Saunders D."/>
            <person name="Seeger K."/>
            <person name="Sharp S."/>
            <person name="Skelton J."/>
            <person name="Simmonds M.N."/>
            <person name="Squares R."/>
            <person name="Squares S."/>
            <person name="Stevens K."/>
            <person name="Taylor K."/>
            <person name="Taylor R.G."/>
            <person name="Tivey A."/>
            <person name="Walsh S.V."/>
            <person name="Warren T."/>
            <person name="Whitehead S."/>
            <person name="Woodward J.R."/>
            <person name="Volckaert G."/>
            <person name="Aert R."/>
            <person name="Robben J."/>
            <person name="Grymonprez B."/>
            <person name="Weltjens I."/>
            <person name="Vanstreels E."/>
            <person name="Rieger M."/>
            <person name="Schaefer M."/>
            <person name="Mueller-Auer S."/>
            <person name="Gabel C."/>
            <person name="Fuchs M."/>
            <person name="Duesterhoeft A."/>
            <person name="Fritzc C."/>
            <person name="Holzer E."/>
            <person name="Moestl D."/>
            <person name="Hilbert H."/>
            <person name="Borzym K."/>
            <person name="Langer I."/>
            <person name="Beck A."/>
            <person name="Lehrach H."/>
            <person name="Reinhardt R."/>
            <person name="Pohl T.M."/>
            <person name="Eger P."/>
            <person name="Zimmermann W."/>
            <person name="Wedler H."/>
            <person name="Wambutt R."/>
            <person name="Purnelle B."/>
            <person name="Goffeau A."/>
            <person name="Cadieu E."/>
            <person name="Dreano S."/>
            <person name="Gloux S."/>
            <person name="Lelaure V."/>
            <person name="Mottier S."/>
            <person name="Galibert F."/>
            <person name="Aves S.J."/>
            <person name="Xiang Z."/>
            <person name="Hunt C."/>
            <person name="Moore K."/>
            <person name="Hurst S.M."/>
            <person name="Lucas M."/>
            <person name="Rochet M."/>
            <person name="Gaillardin C."/>
            <person name="Tallada V.A."/>
            <person name="Garzon A."/>
            <person name="Thode G."/>
            <person name="Daga R.R."/>
            <person name="Cruzado L."/>
            <person name="Jimenez J."/>
            <person name="Sanchez M."/>
            <person name="del Rey F."/>
            <person name="Benito J."/>
            <person name="Dominguez A."/>
            <person name="Revuelta J.L."/>
            <person name="Moreno S."/>
            <person name="Armstrong J."/>
            <person name="Forsburg S.L."/>
            <person name="Cerutti L."/>
            <person name="Lowe T."/>
            <person name="McCombie W.R."/>
            <person name="Paulsen I."/>
            <person name="Potashkin J."/>
            <person name="Shpakovski G.V."/>
            <person name="Ussery D."/>
            <person name="Barrell B.G."/>
            <person name="Nurse P."/>
        </authorList>
    </citation>
    <scope>NUCLEOTIDE SEQUENCE [LARGE SCALE GENOMIC DNA]</scope>
    <source>
        <strain>972 / ATCC 24843</strain>
    </source>
</reference>
<protein>
    <recommendedName>
        <fullName>Protein rax1</fullName>
    </recommendedName>
</protein>
<accession>Q9P7S8</accession>
<organism>
    <name type="scientific">Schizosaccharomyces pombe (strain 972 / ATCC 24843)</name>
    <name type="common">Fission yeast</name>
    <dbReference type="NCBI Taxonomy" id="284812"/>
    <lineage>
        <taxon>Eukaryota</taxon>
        <taxon>Fungi</taxon>
        <taxon>Dikarya</taxon>
        <taxon>Ascomycota</taxon>
        <taxon>Taphrinomycotina</taxon>
        <taxon>Schizosaccharomycetes</taxon>
        <taxon>Schizosaccharomycetales</taxon>
        <taxon>Schizosaccharomycetaceae</taxon>
        <taxon>Schizosaccharomyces</taxon>
    </lineage>
</organism>
<dbReference type="EMBL" id="CU329670">
    <property type="protein sequence ID" value="CAB72230.1"/>
    <property type="molecule type" value="Genomic_DNA"/>
</dbReference>
<dbReference type="PIR" id="T50179">
    <property type="entry name" value="T50179"/>
</dbReference>
<dbReference type="RefSeq" id="NP_593105.1">
    <property type="nucleotide sequence ID" value="NM_001018502.2"/>
</dbReference>
<dbReference type="BioGRID" id="278271">
    <property type="interactions" value="9"/>
</dbReference>
<dbReference type="FunCoup" id="Q9P7S8">
    <property type="interactions" value="80"/>
</dbReference>
<dbReference type="STRING" id="284812.Q9P7S8"/>
<dbReference type="iPTMnet" id="Q9P7S8"/>
<dbReference type="PaxDb" id="4896-SPAC23G3.05c.1"/>
<dbReference type="EnsemblFungi" id="SPAC23G3.05c.1">
    <property type="protein sequence ID" value="SPAC23G3.05c.1:pep"/>
    <property type="gene ID" value="SPAC23G3.05c"/>
</dbReference>
<dbReference type="KEGG" id="spo:2541778"/>
<dbReference type="PomBase" id="SPAC23G3.05c"/>
<dbReference type="VEuPathDB" id="FungiDB:SPAC23G3.05c"/>
<dbReference type="eggNOG" id="ENOG502QRI8">
    <property type="taxonomic scope" value="Eukaryota"/>
</dbReference>
<dbReference type="HOGENOM" id="CLU_029881_1_1_1"/>
<dbReference type="InParanoid" id="Q9P7S8"/>
<dbReference type="OMA" id="WAPIREP"/>
<dbReference type="PhylomeDB" id="Q9P7S8"/>
<dbReference type="Reactome" id="R-SPO-983231">
    <property type="pathway name" value="Factors involved in megakaryocyte development and platelet production"/>
</dbReference>
<dbReference type="PRO" id="PR:Q9P7S8"/>
<dbReference type="Proteomes" id="UP000002485">
    <property type="component" value="Chromosome I"/>
</dbReference>
<dbReference type="GO" id="GO:0005783">
    <property type="term" value="C:endoplasmic reticulum"/>
    <property type="evidence" value="ECO:0007005"/>
    <property type="project" value="PomBase"/>
</dbReference>
<dbReference type="GO" id="GO:0005789">
    <property type="term" value="C:endoplasmic reticulum membrane"/>
    <property type="evidence" value="ECO:0007669"/>
    <property type="project" value="UniProtKB-SubCell"/>
</dbReference>
<dbReference type="GO" id="GO:0005886">
    <property type="term" value="C:plasma membrane"/>
    <property type="evidence" value="ECO:0000318"/>
    <property type="project" value="GO_Central"/>
</dbReference>
<dbReference type="GO" id="GO:0051301">
    <property type="term" value="P:cell division"/>
    <property type="evidence" value="ECO:0007669"/>
    <property type="project" value="UniProtKB-KW"/>
</dbReference>
<dbReference type="GO" id="GO:0008104">
    <property type="term" value="P:protein localization"/>
    <property type="evidence" value="ECO:0000318"/>
    <property type="project" value="GO_Central"/>
</dbReference>
<dbReference type="Gene3D" id="1.10.167.10">
    <property type="entry name" value="Regulator of G-protein Signalling 4, domain 2"/>
    <property type="match status" value="1"/>
</dbReference>
<dbReference type="InterPro" id="IPR052246">
    <property type="entry name" value="Cell_Polariz_PKAAnc"/>
</dbReference>
<dbReference type="InterPro" id="IPR016137">
    <property type="entry name" value="RGS"/>
</dbReference>
<dbReference type="InterPro" id="IPR036305">
    <property type="entry name" value="RGS_sf"/>
</dbReference>
<dbReference type="InterPro" id="IPR044926">
    <property type="entry name" value="RGS_subdomain_2"/>
</dbReference>
<dbReference type="PANTHER" id="PTHR13155:SF1">
    <property type="entry name" value="A-KINASE ANCHOR PROTEIN 10, MITOCHONDRIAL"/>
    <property type="match status" value="1"/>
</dbReference>
<dbReference type="PANTHER" id="PTHR13155">
    <property type="entry name" value="A-KINASE ANCHOR PROTEINS"/>
    <property type="match status" value="1"/>
</dbReference>
<dbReference type="Pfam" id="PF00615">
    <property type="entry name" value="RGS"/>
    <property type="match status" value="1"/>
</dbReference>
<dbReference type="SUPFAM" id="SSF48097">
    <property type="entry name" value="Regulator of G-protein signaling, RGS"/>
    <property type="match status" value="1"/>
</dbReference>
<proteinExistence type="inferred from homology"/>